<keyword id="KW-0067">ATP-binding</keyword>
<keyword id="KW-0315">Glutamine amidotransferase</keyword>
<keyword id="KW-0332">GMP biosynthesis</keyword>
<keyword id="KW-0436">Ligase</keyword>
<keyword id="KW-0547">Nucleotide-binding</keyword>
<keyword id="KW-0658">Purine biosynthesis</keyword>
<protein>
    <recommendedName>
        <fullName evidence="1">GMP synthase [glutamine-hydrolyzing]</fullName>
        <ecNumber evidence="1">6.3.5.2</ecNumber>
    </recommendedName>
    <alternativeName>
        <fullName evidence="1">GMP synthetase</fullName>
    </alternativeName>
    <alternativeName>
        <fullName evidence="1">Glutamine amidotransferase</fullName>
    </alternativeName>
</protein>
<name>GUAA_BACFN</name>
<gene>
    <name evidence="1" type="primary">guaA</name>
    <name type="ordered locus">BF0887</name>
</gene>
<organism>
    <name type="scientific">Bacteroides fragilis (strain ATCC 25285 / DSM 2151 / CCUG 4856 / JCM 11019 / LMG 10263 / NCTC 9343 / Onslow / VPI 2553 / EN-2)</name>
    <dbReference type="NCBI Taxonomy" id="272559"/>
    <lineage>
        <taxon>Bacteria</taxon>
        <taxon>Pseudomonadati</taxon>
        <taxon>Bacteroidota</taxon>
        <taxon>Bacteroidia</taxon>
        <taxon>Bacteroidales</taxon>
        <taxon>Bacteroidaceae</taxon>
        <taxon>Bacteroides</taxon>
    </lineage>
</organism>
<sequence length="507" mass="56437">MQEKIIILDFGSQTTQLIGRRVRELDTYCEIVPYNKFPKGDETVKGVILSGSPFSVYDESAFKVDLSEIRGKYPILGICYGAQFMAYTNGGKVEPAGTREYGRAHLTSFCKDNVLFKGVREGTQVWMSHGDTITAIPENFKTIASTDKVAIAAYQVEGEQVWGVQFHPEVFHSEDGTQMLRNFVVDVCGCKQDWSPASFIESTVAELKAQLGDDKVVLGLSGGVDSSVAAVLLNRAIGKNLTCIFVDHGMLRKNEFKNVMHDYECLGLNVIGVDASEKFFSELEGVTEPERKRKIIGKGFIDVFDEEAHKLKDVKWLAQGTIYPDCIESLSITGTVIKSHHNVGGLPEKMNLKLCEPLRLLFKDEVRRVGRELGMPEHLITRHPFPGPGLAVRILGDITPEKVRILQDADDIFIQGLRDWGLYDQVWQAGVILLPVQSVGVMGDERTYERAVALRAVTSTDAMTADWAHLPYEFLGKVSNDIINKVKGVNRVTYDISSKPPATIEWE</sequence>
<comment type="function">
    <text evidence="1">Catalyzes the synthesis of GMP from XMP.</text>
</comment>
<comment type="catalytic activity">
    <reaction evidence="1">
        <text>XMP + L-glutamine + ATP + H2O = GMP + L-glutamate + AMP + diphosphate + 2 H(+)</text>
        <dbReference type="Rhea" id="RHEA:11680"/>
        <dbReference type="ChEBI" id="CHEBI:15377"/>
        <dbReference type="ChEBI" id="CHEBI:15378"/>
        <dbReference type="ChEBI" id="CHEBI:29985"/>
        <dbReference type="ChEBI" id="CHEBI:30616"/>
        <dbReference type="ChEBI" id="CHEBI:33019"/>
        <dbReference type="ChEBI" id="CHEBI:57464"/>
        <dbReference type="ChEBI" id="CHEBI:58115"/>
        <dbReference type="ChEBI" id="CHEBI:58359"/>
        <dbReference type="ChEBI" id="CHEBI:456215"/>
        <dbReference type="EC" id="6.3.5.2"/>
    </reaction>
</comment>
<comment type="pathway">
    <text evidence="1">Purine metabolism; GMP biosynthesis; GMP from XMP (L-Gln route): step 1/1.</text>
</comment>
<comment type="subunit">
    <text evidence="1">Homodimer.</text>
</comment>
<evidence type="ECO:0000255" key="1">
    <source>
        <dbReference type="HAMAP-Rule" id="MF_00344"/>
    </source>
</evidence>
<proteinExistence type="inferred from homology"/>
<dbReference type="EC" id="6.3.5.2" evidence="1"/>
<dbReference type="EMBL" id="CR626927">
    <property type="protein sequence ID" value="CAH06630.1"/>
    <property type="molecule type" value="Genomic_DNA"/>
</dbReference>
<dbReference type="RefSeq" id="WP_005785252.1">
    <property type="nucleotide sequence ID" value="NZ_UFTH01000001.1"/>
</dbReference>
<dbReference type="SMR" id="Q5LGV6"/>
<dbReference type="MEROPS" id="C26.957"/>
<dbReference type="PaxDb" id="272559-BF9343_0849"/>
<dbReference type="GeneID" id="60368196"/>
<dbReference type="KEGG" id="bfs:BF9343_0849"/>
<dbReference type="eggNOG" id="COG0518">
    <property type="taxonomic scope" value="Bacteria"/>
</dbReference>
<dbReference type="eggNOG" id="COG0519">
    <property type="taxonomic scope" value="Bacteria"/>
</dbReference>
<dbReference type="HOGENOM" id="CLU_014340_0_5_10"/>
<dbReference type="UniPathway" id="UPA00189">
    <property type="reaction ID" value="UER00296"/>
</dbReference>
<dbReference type="Proteomes" id="UP000006731">
    <property type="component" value="Chromosome"/>
</dbReference>
<dbReference type="GO" id="GO:0005829">
    <property type="term" value="C:cytosol"/>
    <property type="evidence" value="ECO:0007669"/>
    <property type="project" value="TreeGrafter"/>
</dbReference>
<dbReference type="GO" id="GO:0005524">
    <property type="term" value="F:ATP binding"/>
    <property type="evidence" value="ECO:0007669"/>
    <property type="project" value="UniProtKB-UniRule"/>
</dbReference>
<dbReference type="GO" id="GO:0003921">
    <property type="term" value="F:GMP synthase activity"/>
    <property type="evidence" value="ECO:0007669"/>
    <property type="project" value="InterPro"/>
</dbReference>
<dbReference type="CDD" id="cd01742">
    <property type="entry name" value="GATase1_GMP_Synthase"/>
    <property type="match status" value="1"/>
</dbReference>
<dbReference type="CDD" id="cd01997">
    <property type="entry name" value="GMP_synthase_C"/>
    <property type="match status" value="1"/>
</dbReference>
<dbReference type="FunFam" id="3.30.300.10:FF:000002">
    <property type="entry name" value="GMP synthase [glutamine-hydrolyzing]"/>
    <property type="match status" value="1"/>
</dbReference>
<dbReference type="FunFam" id="3.40.50.620:FF:000001">
    <property type="entry name" value="GMP synthase [glutamine-hydrolyzing]"/>
    <property type="match status" value="1"/>
</dbReference>
<dbReference type="FunFam" id="3.40.50.880:FF:000001">
    <property type="entry name" value="GMP synthase [glutamine-hydrolyzing]"/>
    <property type="match status" value="1"/>
</dbReference>
<dbReference type="Gene3D" id="3.30.300.10">
    <property type="match status" value="1"/>
</dbReference>
<dbReference type="Gene3D" id="3.40.50.880">
    <property type="match status" value="1"/>
</dbReference>
<dbReference type="Gene3D" id="3.40.50.620">
    <property type="entry name" value="HUPs"/>
    <property type="match status" value="1"/>
</dbReference>
<dbReference type="HAMAP" id="MF_00344">
    <property type="entry name" value="GMP_synthase"/>
    <property type="match status" value="1"/>
</dbReference>
<dbReference type="InterPro" id="IPR029062">
    <property type="entry name" value="Class_I_gatase-like"/>
</dbReference>
<dbReference type="InterPro" id="IPR017926">
    <property type="entry name" value="GATASE"/>
</dbReference>
<dbReference type="InterPro" id="IPR001674">
    <property type="entry name" value="GMP_synth_C"/>
</dbReference>
<dbReference type="InterPro" id="IPR004739">
    <property type="entry name" value="GMP_synth_GATase"/>
</dbReference>
<dbReference type="InterPro" id="IPR022955">
    <property type="entry name" value="GMP_synthase"/>
</dbReference>
<dbReference type="InterPro" id="IPR025777">
    <property type="entry name" value="GMPS_ATP_PPase_dom"/>
</dbReference>
<dbReference type="InterPro" id="IPR022310">
    <property type="entry name" value="NAD/GMP_synthase"/>
</dbReference>
<dbReference type="InterPro" id="IPR014729">
    <property type="entry name" value="Rossmann-like_a/b/a_fold"/>
</dbReference>
<dbReference type="NCBIfam" id="TIGR00884">
    <property type="entry name" value="guaA_Cterm"/>
    <property type="match status" value="1"/>
</dbReference>
<dbReference type="NCBIfam" id="TIGR00888">
    <property type="entry name" value="guaA_Nterm"/>
    <property type="match status" value="1"/>
</dbReference>
<dbReference type="NCBIfam" id="NF000848">
    <property type="entry name" value="PRK00074.1"/>
    <property type="match status" value="1"/>
</dbReference>
<dbReference type="PANTHER" id="PTHR11922:SF2">
    <property type="entry name" value="GMP SYNTHASE [GLUTAMINE-HYDROLYZING]"/>
    <property type="match status" value="1"/>
</dbReference>
<dbReference type="PANTHER" id="PTHR11922">
    <property type="entry name" value="GMP SYNTHASE-RELATED"/>
    <property type="match status" value="1"/>
</dbReference>
<dbReference type="Pfam" id="PF00117">
    <property type="entry name" value="GATase"/>
    <property type="match status" value="1"/>
</dbReference>
<dbReference type="Pfam" id="PF00958">
    <property type="entry name" value="GMP_synt_C"/>
    <property type="match status" value="1"/>
</dbReference>
<dbReference type="Pfam" id="PF02540">
    <property type="entry name" value="NAD_synthase"/>
    <property type="match status" value="1"/>
</dbReference>
<dbReference type="PRINTS" id="PR00096">
    <property type="entry name" value="GATASE"/>
</dbReference>
<dbReference type="SUPFAM" id="SSF52402">
    <property type="entry name" value="Adenine nucleotide alpha hydrolases-like"/>
    <property type="match status" value="1"/>
</dbReference>
<dbReference type="SUPFAM" id="SSF52317">
    <property type="entry name" value="Class I glutamine amidotransferase-like"/>
    <property type="match status" value="1"/>
</dbReference>
<dbReference type="SUPFAM" id="SSF54810">
    <property type="entry name" value="GMP synthetase C-terminal dimerisation domain"/>
    <property type="match status" value="1"/>
</dbReference>
<dbReference type="PROSITE" id="PS51273">
    <property type="entry name" value="GATASE_TYPE_1"/>
    <property type="match status" value="1"/>
</dbReference>
<dbReference type="PROSITE" id="PS51553">
    <property type="entry name" value="GMPS_ATP_PPASE"/>
    <property type="match status" value="1"/>
</dbReference>
<accession>Q5LGV6</accession>
<reference key="1">
    <citation type="journal article" date="2005" name="Science">
        <title>Extensive DNA inversions in the B. fragilis genome control variable gene expression.</title>
        <authorList>
            <person name="Cerdeno-Tarraga A.-M."/>
            <person name="Patrick S."/>
            <person name="Crossman L.C."/>
            <person name="Blakely G."/>
            <person name="Abratt V."/>
            <person name="Lennard N."/>
            <person name="Poxton I."/>
            <person name="Duerden B."/>
            <person name="Harris B."/>
            <person name="Quail M.A."/>
            <person name="Barron A."/>
            <person name="Clark L."/>
            <person name="Corton C."/>
            <person name="Doggett J."/>
            <person name="Holden M.T.G."/>
            <person name="Larke N."/>
            <person name="Line A."/>
            <person name="Lord A."/>
            <person name="Norbertczak H."/>
            <person name="Ormond D."/>
            <person name="Price C."/>
            <person name="Rabbinowitsch E."/>
            <person name="Woodward J."/>
            <person name="Barrell B.G."/>
            <person name="Parkhill J."/>
        </authorList>
    </citation>
    <scope>NUCLEOTIDE SEQUENCE [LARGE SCALE GENOMIC DNA]</scope>
    <source>
        <strain>ATCC 25285 / DSM 2151 / CCUG 4856 / JCM 11019 / LMG 10263 / NCTC 9343 / Onslow / VPI 2553 / EN-2</strain>
    </source>
</reference>
<feature type="chain" id="PRO_0000229404" description="GMP synthase [glutamine-hydrolyzing]">
    <location>
        <begin position="1"/>
        <end position="507"/>
    </location>
</feature>
<feature type="domain" description="Glutamine amidotransferase type-1" evidence="1">
    <location>
        <begin position="4"/>
        <end position="193"/>
    </location>
</feature>
<feature type="domain" description="GMPS ATP-PPase" evidence="1">
    <location>
        <begin position="194"/>
        <end position="382"/>
    </location>
</feature>
<feature type="active site" description="Nucleophile" evidence="1">
    <location>
        <position position="79"/>
    </location>
</feature>
<feature type="active site" evidence="1">
    <location>
        <position position="167"/>
    </location>
</feature>
<feature type="active site" evidence="1">
    <location>
        <position position="169"/>
    </location>
</feature>
<feature type="binding site" evidence="1">
    <location>
        <begin position="221"/>
        <end position="227"/>
    </location>
    <ligand>
        <name>ATP</name>
        <dbReference type="ChEBI" id="CHEBI:30616"/>
    </ligand>
</feature>